<gene>
    <name evidence="10" type="primary">fxr1</name>
    <name type="ORF">TEgg078n09.1</name>
</gene>
<name>FXR1_XENTR</name>
<reference evidence="14" key="1">
    <citation type="submission" date="2006-03" db="EMBL/GenBank/DDBJ databases">
        <authorList>
            <consortium name="Sanger Xenopus tropicalis EST/cDNA project"/>
        </authorList>
    </citation>
    <scope>NUCLEOTIDE SEQUENCE [LARGE SCALE MRNA]</scope>
    <source>
        <tissue>Egg</tissue>
    </source>
</reference>
<reference evidence="14" key="2">
    <citation type="submission" date="2005-03" db="EMBL/GenBank/DDBJ databases">
        <authorList>
            <consortium name="NIH - Xenopus Gene Collection (XGC) project"/>
        </authorList>
    </citation>
    <scope>NUCLEOTIDE SEQUENCE [LARGE SCALE MRNA] OF 4-674 (ISOFORM 2)</scope>
    <source>
        <tissue evidence="13">Embryo</tissue>
    </source>
</reference>
<reference key="3">
    <citation type="journal article" date="2005" name="Int. J. Dev. Biol.">
        <title>Two members of the Fxr gene family, Fmr1 and Fxr1, are differentially expressed in Xenopus tropicalis.</title>
        <authorList>
            <person name="Blonden L."/>
            <person name="van 't Padje S."/>
            <person name="Severijnen L.-A."/>
            <person name="Destree O."/>
            <person name="Oostra B.A."/>
            <person name="Willemsen R."/>
        </authorList>
    </citation>
    <scope>IDENTIFICATION (ISOFORM 1)</scope>
    <scope>SUBCELLULAR LOCATION</scope>
    <scope>TISSUE SPECIFICITY</scope>
</reference>
<reference key="4">
    <citation type="journal article" date="2020" name="J. Cell Biol.">
        <title>FXR1 splicing is important for muscle development and biomolecular condensates in muscle cells.</title>
        <authorList>
            <person name="Smith J.A."/>
            <person name="Curry E.G."/>
            <person name="Blue R.E."/>
            <person name="Roden C."/>
            <person name="Dundon S.E.R."/>
            <person name="Rodriguez-Vargas A."/>
            <person name="Jordan D.C."/>
            <person name="Chen X."/>
            <person name="Lyons S.M."/>
            <person name="Crutchley J."/>
            <person name="Anderson P."/>
            <person name="Horb M.E."/>
            <person name="Gladfelter A.S."/>
            <person name="Giudice J."/>
        </authorList>
    </citation>
    <scope>FUNCTION (ISOFORMS 1 AND 2)</scope>
</reference>
<accession>Q5BJ56</accession>
<accession>Q28C19</accession>
<evidence type="ECO:0000250" key="1">
    <source>
        <dbReference type="UniProtKB" id="P51114"/>
    </source>
</evidence>
<evidence type="ECO:0000250" key="2">
    <source>
        <dbReference type="UniProtKB" id="Q61584"/>
    </source>
</evidence>
<evidence type="ECO:0000255" key="3"/>
<evidence type="ECO:0000255" key="4">
    <source>
        <dbReference type="PROSITE-ProRule" id="PRU00117"/>
    </source>
</evidence>
<evidence type="ECO:0000255" key="5">
    <source>
        <dbReference type="PROSITE-ProRule" id="PRU00973"/>
    </source>
</evidence>
<evidence type="ECO:0000256" key="6">
    <source>
        <dbReference type="SAM" id="MobiDB-lite"/>
    </source>
</evidence>
<evidence type="ECO:0000269" key="7">
    <source>
    </source>
</evidence>
<evidence type="ECO:0000269" key="8">
    <source>
    </source>
</evidence>
<evidence type="ECO:0000303" key="9">
    <source>
    </source>
</evidence>
<evidence type="ECO:0000303" key="10">
    <source>
    </source>
</evidence>
<evidence type="ECO:0000303" key="11">
    <source ref="2"/>
</evidence>
<evidence type="ECO:0000305" key="12"/>
<evidence type="ECO:0000312" key="13">
    <source>
        <dbReference type="EMBL" id="AAH91614.1"/>
    </source>
</evidence>
<evidence type="ECO:0000312" key="14">
    <source>
        <dbReference type="EMBL" id="CAJ81473.1"/>
    </source>
</evidence>
<comment type="function">
    <text evidence="1 2">mRNA-binding protein that acts as a regulator of mRNAs translation and/or stability, and which is required for various processes, such as neurogenesis and muscle development (By similarity). Specifically binds to AU-rich elements (AREs) in the 3'-UTR of target mRNAs (By similarity). Promotes formation of some phase-separated membraneless compartment by undergoing liquid-liquid phase separation upon binding to AREs-containing mRNAs, leading to assemble mRNAs into cytoplasmic ribonucleoprotein granules that concentrate mRNAs with associated regulatory factors (By similarity). Forms a cytoplasmic messenger ribonucleoprotein (mRNP) network by packaging long mRNAs, serving as a scaffold that recruits proteins and signaling molecules. This network facilitates signaling reactions by maintaining proximity between kinases and substrates, crucial for processes like actomyosin reorganization (By similarity).</text>
</comment>
<comment type="function">
    <molecule>Isoform 1</molecule>
    <text evidence="8">Required for somite formation by undergoing liquid-liquid phase separation to assemble target mRNAs into cytoplasmic ribonucleoprotein granules.</text>
</comment>
<comment type="function">
    <molecule>Isoform 2</molecule>
    <text evidence="8">Not involved in somite development.</text>
</comment>
<comment type="subcellular location">
    <subcellularLocation>
        <location evidence="2">Cytoplasm</location>
        <location evidence="2">Cytoplasmic ribonucleoprotein granule</location>
    </subcellularLocation>
    <subcellularLocation>
        <location evidence="1">Cytoplasm</location>
        <location evidence="1">Stress granule</location>
    </subcellularLocation>
    <subcellularLocation>
        <location evidence="7">Cytoplasm</location>
    </subcellularLocation>
    <subcellularLocation>
        <location evidence="7">Nucleus</location>
    </subcellularLocation>
    <text evidence="2 7">Specifically localizes to cytoplasmic ribonucleoprotein membraneless compartments (By similarity). Nuclear very early in embryonic development (at two hours post-fertilization), becoming cytoplasmic in later embryonic stages through to adulthood (PubMed:15968590).</text>
</comment>
<comment type="alternative products">
    <event type="alternative splicing"/>
    <isoform>
        <id>Q5BJ56-1</id>
        <name evidence="7">1</name>
        <sequence type="displayed"/>
    </isoform>
    <isoform>
        <id>Q5BJ56-2</id>
        <name>2</name>
        <sequence type="described" ref="VSP_052085"/>
    </isoform>
</comment>
<comment type="tissue specificity">
    <text evidence="7">Shows tissue-specific expression during embryonic development (PubMed:15968590). At stage 23, expressed preferentially in structures that will develop into muscle (mesodermal) and neural (ectodermal) tissue (PubMed:15968590). From stage 37 onwards, highly expressed in neurons and skeletal muscle tissue (PubMed:15968590). Expression remains tissue-specific in adults, being localized to neurons of the central nervous system (CNS), all spermatogenic cells of the testis and skeletal muscle (PubMed:15968590). Within skeletal muscle, expression appears to be localized to costameres (PubMed:15968590).</text>
</comment>
<comment type="domain">
    <text evidence="2">Disordered region at the C-terminus undergoes liquid-liquid phase separation (LLPS) for the formation of a membraneless compartment that stores mRNAs.</text>
</comment>
<comment type="domain">
    <text evidence="1">CC1 and CC2 domains are required for homodimerization and FXR1-network nucleation. CC domains also mediate interaction with other proteins containing similar CC domains.</text>
</comment>
<comment type="similarity">
    <text evidence="12">Belongs to the FMR1 family.</text>
</comment>
<comment type="sequence caution" evidence="12">
    <conflict type="miscellaneous discrepancy">
        <sequence resource="EMBL-CDS" id="CAJ81473"/>
    </conflict>
    <text>Contaminating sequence. Sequence of unknown origin in the C-terminal part.</text>
</comment>
<organism>
    <name type="scientific">Xenopus tropicalis</name>
    <name type="common">Western clawed frog</name>
    <name type="synonym">Silurana tropicalis</name>
    <dbReference type="NCBI Taxonomy" id="8364"/>
    <lineage>
        <taxon>Eukaryota</taxon>
        <taxon>Metazoa</taxon>
        <taxon>Chordata</taxon>
        <taxon>Craniata</taxon>
        <taxon>Vertebrata</taxon>
        <taxon>Euteleostomi</taxon>
        <taxon>Amphibia</taxon>
        <taxon>Batrachia</taxon>
        <taxon>Anura</taxon>
        <taxon>Pipoidea</taxon>
        <taxon>Pipidae</taxon>
        <taxon>Xenopodinae</taxon>
        <taxon>Xenopus</taxon>
        <taxon>Silurana</taxon>
    </lineage>
</organism>
<protein>
    <recommendedName>
        <fullName evidence="12">RNA-binding protein fxr1</fullName>
    </recommendedName>
    <alternativeName>
        <fullName evidence="9">XtFxr1p</fullName>
    </alternativeName>
</protein>
<sequence>MEDLAVEVRGSNGAYYKGFVKDVHEDSLTVVFENNWQPERQVPFHEVRMPPLPDIKKEITEGDEVEVYSRANDQEPCGWWLAKVRMMKGEFYVIEYAACDATYNEIVTFERLRPGNQNKSVTKSSFFKCTVDVPEDLREPCSNENVHKEFKKAVGACRVYFHAETNQLIILSACESTVKRVTILSDMHLRSIRTKLMLMSRNEEATKHLECTKQLAAAFHEEFVVREDLMGLAIGTHGSNIQQARKVPGITAIELDEDSGTFRIYGESAEAVKKARSYLEFVEDFIQVPRNLVGKVIGKNGKVIQEIVDKSGVVRVRIEGDNETKLPREDGMVPFVFVGTKESIGNVQVLLEYHIAYLKEVEQLRMERLQIDEQLRQIGMGFRPSSSRGTEKEKGYATDESTASSVRGSRSYSGRGRGRRGPNYTSGYGTNSELSNPSETESERKEELSDWSLAGEDERESRQQRDSRRRPGGRGRSGSAGRGRGGSRGGKSSISSVLKDPDSNPYSLLDNTESDQTADTDASESHHNTNRRRRSRRRRTDEDSSLMDGMTESDNASVNENGLDDSEQKPQRRNRSRRRRFRGQAEDRQPVTVADYISRAESQSRQRNLPKEPLAKGKKEKVKDVIEEHGPSEKVINGPRAASADKALKPQTTERNKASCQDGSKQEAILNGVS</sequence>
<proteinExistence type="evidence at transcript level"/>
<keyword id="KW-0025">Alternative splicing</keyword>
<keyword id="KW-0963">Cytoplasm</keyword>
<keyword id="KW-0217">Developmental protein</keyword>
<keyword id="KW-0221">Differentiation</keyword>
<keyword id="KW-0517">Myogenesis</keyword>
<keyword id="KW-0539">Nucleus</keyword>
<keyword id="KW-1185">Reference proteome</keyword>
<keyword id="KW-0677">Repeat</keyword>
<keyword id="KW-0694">RNA-binding</keyword>
<dbReference type="EMBL" id="CR942504">
    <property type="protein sequence ID" value="CAJ81473.1"/>
    <property type="status" value="ALT_SEQ"/>
    <property type="molecule type" value="mRNA"/>
</dbReference>
<dbReference type="EMBL" id="BC091614">
    <property type="protein sequence ID" value="AAH91614.1"/>
    <property type="molecule type" value="mRNA"/>
</dbReference>
<dbReference type="RefSeq" id="NP_001263426.1">
    <property type="nucleotide sequence ID" value="NM_001276497.1"/>
</dbReference>
<dbReference type="RefSeq" id="NP_001263427.1">
    <property type="nucleotide sequence ID" value="NM_001276498.1"/>
</dbReference>
<dbReference type="SMR" id="Q5BJ56"/>
<dbReference type="FunCoup" id="Q5BJ56">
    <property type="interactions" value="2084"/>
</dbReference>
<dbReference type="STRING" id="8364.ENSXETP00000032646"/>
<dbReference type="PaxDb" id="8364-ENSXETP00000042154"/>
<dbReference type="GeneID" id="594894"/>
<dbReference type="KEGG" id="xtr:594894"/>
<dbReference type="CTD" id="8087"/>
<dbReference type="eggNOG" id="ENOG502QPKJ">
    <property type="taxonomic scope" value="Eukaryota"/>
</dbReference>
<dbReference type="InParanoid" id="Q5BJ56"/>
<dbReference type="OrthoDB" id="424249at2759"/>
<dbReference type="Proteomes" id="UP000008143">
    <property type="component" value="Chromosome 5"/>
</dbReference>
<dbReference type="GO" id="GO:0005737">
    <property type="term" value="C:cytoplasm"/>
    <property type="evidence" value="ECO:0000314"/>
    <property type="project" value="UniProtKB"/>
</dbReference>
<dbReference type="GO" id="GO:0010494">
    <property type="term" value="C:cytoplasmic stress granule"/>
    <property type="evidence" value="ECO:0007669"/>
    <property type="project" value="UniProtKB-SubCell"/>
</dbReference>
<dbReference type="GO" id="GO:0043232">
    <property type="term" value="C:intracellular membraneless organelle"/>
    <property type="evidence" value="ECO:0000250"/>
    <property type="project" value="UniProtKB"/>
</dbReference>
<dbReference type="GO" id="GO:0005634">
    <property type="term" value="C:nucleus"/>
    <property type="evidence" value="ECO:0000314"/>
    <property type="project" value="UniProtKB"/>
</dbReference>
<dbReference type="GO" id="GO:0140693">
    <property type="term" value="F:molecular condensate scaffold activity"/>
    <property type="evidence" value="ECO:0000250"/>
    <property type="project" value="UniProtKB"/>
</dbReference>
<dbReference type="GO" id="GO:0035925">
    <property type="term" value="F:mRNA 3'-UTR AU-rich region binding"/>
    <property type="evidence" value="ECO:0000250"/>
    <property type="project" value="UniProtKB"/>
</dbReference>
<dbReference type="GO" id="GO:0003729">
    <property type="term" value="F:mRNA binding"/>
    <property type="evidence" value="ECO:0000250"/>
    <property type="project" value="UniProtKB"/>
</dbReference>
<dbReference type="GO" id="GO:0046982">
    <property type="term" value="F:protein heterodimerization activity"/>
    <property type="evidence" value="ECO:0000250"/>
    <property type="project" value="UniProtKB"/>
</dbReference>
<dbReference type="GO" id="GO:0042803">
    <property type="term" value="F:protein homodimerization activity"/>
    <property type="evidence" value="ECO:0000250"/>
    <property type="project" value="UniProtKB"/>
</dbReference>
<dbReference type="GO" id="GO:0003723">
    <property type="term" value="F:RNA binding"/>
    <property type="evidence" value="ECO:0000250"/>
    <property type="project" value="UniProtKB"/>
</dbReference>
<dbReference type="GO" id="GO:0033592">
    <property type="term" value="F:RNA strand annealing activity"/>
    <property type="evidence" value="ECO:0000250"/>
    <property type="project" value="UniProtKB"/>
</dbReference>
<dbReference type="GO" id="GO:0021542">
    <property type="term" value="P:dentate gyrus development"/>
    <property type="evidence" value="ECO:0000250"/>
    <property type="project" value="UniProtKB"/>
</dbReference>
<dbReference type="GO" id="GO:0140694">
    <property type="term" value="P:membraneless organelle assembly"/>
    <property type="evidence" value="ECO:0000250"/>
    <property type="project" value="UniProtKB"/>
</dbReference>
<dbReference type="GO" id="GO:0061157">
    <property type="term" value="P:mRNA destabilization"/>
    <property type="evidence" value="ECO:0000250"/>
    <property type="project" value="UniProtKB"/>
</dbReference>
<dbReference type="GO" id="GO:0007517">
    <property type="term" value="P:muscle organ development"/>
    <property type="evidence" value="ECO:0000250"/>
    <property type="project" value="UniProtKB"/>
</dbReference>
<dbReference type="GO" id="GO:0050728">
    <property type="term" value="P:negative regulation of inflammatory response"/>
    <property type="evidence" value="ECO:0000250"/>
    <property type="project" value="UniProtKB"/>
</dbReference>
<dbReference type="GO" id="GO:1900272">
    <property type="term" value="P:negative regulation of long-term synaptic potentiation"/>
    <property type="evidence" value="ECO:0000250"/>
    <property type="project" value="UniProtKB"/>
</dbReference>
<dbReference type="GO" id="GO:0017148">
    <property type="term" value="P:negative regulation of translation"/>
    <property type="evidence" value="ECO:0000250"/>
    <property type="project" value="UniProtKB"/>
</dbReference>
<dbReference type="GO" id="GO:0032720">
    <property type="term" value="P:negative regulation of tumor necrosis factor production"/>
    <property type="evidence" value="ECO:0000250"/>
    <property type="project" value="UniProtKB"/>
</dbReference>
<dbReference type="GO" id="GO:2000637">
    <property type="term" value="P:positive regulation of miRNA-mediated gene silencing"/>
    <property type="evidence" value="ECO:0000250"/>
    <property type="project" value="UniProtKB"/>
</dbReference>
<dbReference type="GO" id="GO:0045727">
    <property type="term" value="P:positive regulation of translation"/>
    <property type="evidence" value="ECO:0000250"/>
    <property type="project" value="UniProtKB"/>
</dbReference>
<dbReference type="GO" id="GO:0010608">
    <property type="term" value="P:post-transcriptional regulation of gene expression"/>
    <property type="evidence" value="ECO:0000250"/>
    <property type="project" value="UniProtKB"/>
</dbReference>
<dbReference type="GO" id="GO:0050767">
    <property type="term" value="P:regulation of neurogenesis"/>
    <property type="evidence" value="ECO:0000250"/>
    <property type="project" value="UniProtKB"/>
</dbReference>
<dbReference type="GO" id="GO:0051966">
    <property type="term" value="P:regulation of synaptic transmission, glutamatergic"/>
    <property type="evidence" value="ECO:0000250"/>
    <property type="project" value="UniProtKB"/>
</dbReference>
<dbReference type="GO" id="GO:0061053">
    <property type="term" value="P:somite development"/>
    <property type="evidence" value="ECO:0000315"/>
    <property type="project" value="UniProtKB"/>
</dbReference>
<dbReference type="GO" id="GO:0007286">
    <property type="term" value="P:spermatid development"/>
    <property type="evidence" value="ECO:0000250"/>
    <property type="project" value="UniProtKB"/>
</dbReference>
<dbReference type="CDD" id="cd22504">
    <property type="entry name" value="KH_I_FXR1_rpt1"/>
    <property type="match status" value="1"/>
</dbReference>
<dbReference type="CDD" id="cd22507">
    <property type="entry name" value="KH_I_FXR1_rpt2"/>
    <property type="match status" value="1"/>
</dbReference>
<dbReference type="CDD" id="cd22510">
    <property type="entry name" value="KH_I_FXR1_rpt3"/>
    <property type="match status" value="1"/>
</dbReference>
<dbReference type="CDD" id="cd20475">
    <property type="entry name" value="Tudor_Agenet_FXR1_rpt2"/>
    <property type="match status" value="1"/>
</dbReference>
<dbReference type="FunFam" id="2.30.30.140:FF:000001">
    <property type="entry name" value="Fragile X mental retardation 1, isoform CRA_e"/>
    <property type="match status" value="1"/>
</dbReference>
<dbReference type="FunFam" id="2.30.30.140:FF:000002">
    <property type="entry name" value="Fragile X mental retardation 1, isoform CRA_e"/>
    <property type="match status" value="1"/>
</dbReference>
<dbReference type="FunFam" id="3.30.1370.10:FF:000004">
    <property type="entry name" value="Fragile X mental retardation 1, isoform CRA_e"/>
    <property type="match status" value="1"/>
</dbReference>
<dbReference type="FunFam" id="3.30.1370.10:FF:000017">
    <property type="entry name" value="Fragile X mental retardation syndrome-related protein 1"/>
    <property type="match status" value="1"/>
</dbReference>
<dbReference type="Gene3D" id="2.30.30.140">
    <property type="match status" value="2"/>
</dbReference>
<dbReference type="Gene3D" id="3.30.1370.10">
    <property type="entry name" value="K Homology domain, type 1"/>
    <property type="match status" value="2"/>
</dbReference>
<dbReference type="InterPro" id="IPR008395">
    <property type="entry name" value="Agenet-like_dom"/>
</dbReference>
<dbReference type="InterPro" id="IPR040148">
    <property type="entry name" value="FMR1"/>
</dbReference>
<dbReference type="InterPro" id="IPR022034">
    <property type="entry name" value="FMR1-like_C_core"/>
</dbReference>
<dbReference type="InterPro" id="IPR040472">
    <property type="entry name" value="FMRP_KH0"/>
</dbReference>
<dbReference type="InterPro" id="IPR032172">
    <property type="entry name" value="FXR1_C1"/>
</dbReference>
<dbReference type="InterPro" id="IPR032177">
    <property type="entry name" value="FXR_C3"/>
</dbReference>
<dbReference type="InterPro" id="IPR004087">
    <property type="entry name" value="KH_dom"/>
</dbReference>
<dbReference type="InterPro" id="IPR004088">
    <property type="entry name" value="KH_dom_type_1"/>
</dbReference>
<dbReference type="InterPro" id="IPR036612">
    <property type="entry name" value="KH_dom_type_1_sf"/>
</dbReference>
<dbReference type="InterPro" id="IPR047494">
    <property type="entry name" value="KH_I_FXR1_rpt1"/>
</dbReference>
<dbReference type="InterPro" id="IPR047495">
    <property type="entry name" value="KH_I_FXR1_rpt2"/>
</dbReference>
<dbReference type="InterPro" id="IPR047496">
    <property type="entry name" value="KH_I_FXR1_rpt3"/>
</dbReference>
<dbReference type="InterPro" id="IPR047427">
    <property type="entry name" value="Tudor_Agenet_FXR1_rpt2"/>
</dbReference>
<dbReference type="InterPro" id="IPR041560">
    <property type="entry name" value="Tudor_FRM1"/>
</dbReference>
<dbReference type="PANTHER" id="PTHR10603">
    <property type="entry name" value="FRAGILE X MENTAL RETARDATION SYNDROME-RELATED PROTEIN"/>
    <property type="match status" value="1"/>
</dbReference>
<dbReference type="PANTHER" id="PTHR10603:SF6">
    <property type="entry name" value="RNA-BINDING PROTEIN FXR1"/>
    <property type="match status" value="1"/>
</dbReference>
<dbReference type="Pfam" id="PF05641">
    <property type="entry name" value="Agenet"/>
    <property type="match status" value="1"/>
</dbReference>
<dbReference type="Pfam" id="PF12235">
    <property type="entry name" value="FXMRP1_C_core"/>
    <property type="match status" value="1"/>
</dbReference>
<dbReference type="Pfam" id="PF16096">
    <property type="entry name" value="FXR_C1"/>
    <property type="match status" value="1"/>
</dbReference>
<dbReference type="Pfam" id="PF16097">
    <property type="entry name" value="FXR_C3"/>
    <property type="match status" value="1"/>
</dbReference>
<dbReference type="Pfam" id="PF00013">
    <property type="entry name" value="KH_1"/>
    <property type="match status" value="2"/>
</dbReference>
<dbReference type="Pfam" id="PF17904">
    <property type="entry name" value="KH_9"/>
    <property type="match status" value="1"/>
</dbReference>
<dbReference type="Pfam" id="PF18336">
    <property type="entry name" value="Tudor_FRX1"/>
    <property type="match status" value="1"/>
</dbReference>
<dbReference type="SMART" id="SM00322">
    <property type="entry name" value="KH"/>
    <property type="match status" value="2"/>
</dbReference>
<dbReference type="SUPFAM" id="SSF54791">
    <property type="entry name" value="Eukaryotic type KH-domain (KH-domain type I)"/>
    <property type="match status" value="2"/>
</dbReference>
<dbReference type="PROSITE" id="PS51641">
    <property type="entry name" value="AGENET_LIKE"/>
    <property type="match status" value="2"/>
</dbReference>
<dbReference type="PROSITE" id="PS50084">
    <property type="entry name" value="KH_TYPE_1"/>
    <property type="match status" value="2"/>
</dbReference>
<feature type="chain" id="PRO_0000245325" description="RNA-binding protein fxr1">
    <location>
        <begin position="1"/>
        <end position="674"/>
    </location>
</feature>
<feature type="domain" description="Agenet-like 1" evidence="5">
    <location>
        <begin position="4"/>
        <end position="50"/>
    </location>
</feature>
<feature type="domain" description="Agenet-like 2" evidence="5">
    <location>
        <begin position="63"/>
        <end position="115"/>
    </location>
</feature>
<feature type="domain" description="KH 1" evidence="4">
    <location>
        <begin position="222"/>
        <end position="251"/>
    </location>
</feature>
<feature type="domain" description="KH 2" evidence="4">
    <location>
        <begin position="285"/>
        <end position="314"/>
    </location>
</feature>
<feature type="region of interest" description="CC1 domain" evidence="1">
    <location>
        <begin position="201"/>
        <end position="208"/>
    </location>
</feature>
<feature type="region of interest" description="CC2 domain" evidence="1">
    <location>
        <begin position="353"/>
        <end position="379"/>
    </location>
</feature>
<feature type="region of interest" description="Disordered" evidence="6">
    <location>
        <begin position="380"/>
        <end position="674"/>
    </location>
</feature>
<feature type="region of interest" description="RNA-binding RGG-box" evidence="3">
    <location>
        <begin position="471"/>
        <end position="486"/>
    </location>
</feature>
<feature type="compositionally biased region" description="Low complexity" evidence="6">
    <location>
        <begin position="404"/>
        <end position="414"/>
    </location>
</feature>
<feature type="compositionally biased region" description="Polar residues" evidence="6">
    <location>
        <begin position="423"/>
        <end position="439"/>
    </location>
</feature>
<feature type="compositionally biased region" description="Gly residues" evidence="6">
    <location>
        <begin position="474"/>
        <end position="489"/>
    </location>
</feature>
<feature type="compositionally biased region" description="Acidic residues" evidence="6">
    <location>
        <begin position="512"/>
        <end position="522"/>
    </location>
</feature>
<feature type="compositionally biased region" description="Basic residues" evidence="6">
    <location>
        <begin position="528"/>
        <end position="538"/>
    </location>
</feature>
<feature type="compositionally biased region" description="Basic residues" evidence="6">
    <location>
        <begin position="571"/>
        <end position="582"/>
    </location>
</feature>
<feature type="compositionally biased region" description="Basic and acidic residues" evidence="6">
    <location>
        <begin position="609"/>
        <end position="632"/>
    </location>
</feature>
<feature type="compositionally biased region" description="Basic and acidic residues" evidence="6">
    <location>
        <begin position="646"/>
        <end position="657"/>
    </location>
</feature>
<feature type="splice variant" id="VSP_052085" description="In isoform 2." evidence="11">
    <location>
        <begin position="564"/>
        <end position="590"/>
    </location>
</feature>